<sequence length="4001" mass="423201">MNNDAKNHESDDLNVRSTAYFNQQTTTNQPKAPATSKNNTGSGSGSNNNNNNTNQNPNRQLNHNLPRIAAARQSIAAALLKNSGRKILTAKNEPLTTTESSGVLTNTPLPSNSRLKVNNNNNTNNTAKMSGTSSSQSSATPTPPTASSSTTTTTTTNISTGGGGSGSSGGGGGSTTVIANPASVTNTGAGSAAKFRAAVASAPSPALPATNAPANATAAAAIAAIATAPAPSSSSSSSSSSKKTRAAVAALKRQVALQQQQPVTGNAPNMTSKDSAHLKFATTTLLMGAAAAAADSNAGAALGGSGAGGSGSSSSVGAVGGARMALNPAVDMANAAVLLKQKLKDAAAAASASASNRSATSSMSSTASSLSSSAGIVNAISSALQNIITPDTDTDTEFYPQPVTTDLSESEEESVSEDDIPESDPDSCPHEGEVREDEDETEEESEDSDESEGEEEEEDEEEIDVLQDNDADDEEIDDEDEEEDAPEVSSFLLDANNKRSSNISALLEAAANEKAPVLRHATHAIDETKQALTKMRCASSPRDKNSGFSRSLVAACTDNDVNTVKRLLCKGNVNLNDAAASTDDGESLLSMACSAGYYELAQVLLAMSAAQVEDKGQKDSTPLMEAASAGHLDIVKLLLNHNADVNAHCATGNTPLMFACAGGQVDVVKVLLKHGANVEEQNENGHTPLMEAASAGHVEVAKVLLEHGAGINTHSNEFKESALTLACYKGHLDMVRFLLQAGADQEHKTDEMHTALMEASMDGHVEVARLLLDSGAQVNMPTDSFESPLTLAACGGHVELATLLIERGANIEEVNDEGYTPLMEAAREGHEEMVALLLSKGANINATTEETQETALTLACCGGFMEVAAFLIKEGANLELGASTPLMEASQEGHTDLVSFLLKKKANVHAETQTGDTALTHACENGHTDAAGVLLSYGAELEHESEGGRTPLMKACRAGHLCTVKFLIQKGANVNKQTTSNDHTALSLACAGGHQSVVELLLKNNADPFHKLKDNSTMLIEASKGGHTRVVELLFRYPNISPTENAASANVTQAAPTSNQPGPNQMRQKIMKQQLQHQLQQLNAPPGLHELSEAARASNQQHFHQQQFSSAGNGSSNIVAMGTGDFLDAGELQLTATAGMSAGAGTSTTGSETGMEEYGEVGGIDLTTLGAQQQEGLIAKSRLFHLQQQQQQQQQQQQQQQQQQQQQQQQQQQQQQPPAAGQHQLVPCKHFDLDMEHINSLQPPQKAPPAPPVLFHTVCQQPVMQQQQQQLQPGQLKLKAMLPNRNRALKTAEVVEFIDCPVDQQQPGEQVRTQPLGEDGKTPQFACAGEDPRLQRRRGFMPELKKGELPPESSSSDPNELALKGADNNQPVPTALDNSACAQIPARNSGGAITHSSEVLQSTAISDRPKVKATNKNNRKQAAAAAAAAAAAAAAAAAAAQHAQQVLPNPMVSIYNNLHLQHLQHPHLQFQQQLQLHHQRVAGLDNAAAAAAAAASSANMAYSISPASPLPSPTGSGNYVDQQLQQQSMDVALQRKTAMDDFRGMLETAVNGPRGRKDLALNTPQLNFFKDGWHMVGVHNFFGDQPKSPTETPPEMEETTMSSPTEADRLGSEPRAEMKNLATLCSAAAAAAAVAAVNKDQVEISSDLESECEDDAEGGAGADCEENTLPPEPIELAAALREDGIIVEEEEDDEEEDDDDEEQDTNSGEVDKLNYDDEDAEVDNDGEVDYIDEDEGGGEGEEEEDDADDDEFFLDEPDSDQGTGNNNNNSKSGASSLPLKQRKMATRLENLILNSQTVCDFPPELSNSELVHVLPQISNLKAAANSNAALNSVLQQQLAAASAAAAHAKASVVHQKQQHGEGDQQCEDDGSASASELYSGLEHFANDGEMEDIFQELASSLNYPELAEFSLNQMCKGRFAGNWAQSSGKWTGQEQLVGVVRSPGLINPGDVPQDAQRQANLVLLDYPMQQNIQLEQRLLDAEEMHLQQHQQTPLSLLPFTDEQQQQLHHQALSNASDFQQHQQLALENDPELKQQLQQNSNARIIKAVAAQHQQQPPTNFVYNVESGDKNAPPVQLLFQLPPHMAQHQAQQQQGVGEPLTEQQQQQLHAEQAHLFQHRTGGQRPPTQSELEQVAQELLLQRSGQVPAGAPVVGVQAIPLKQKHFNLHPPPCPPTCVQHQVATQTHPASVVVPQPAVGYTQFALQASQQQQMQQNELSIWPMATPTPAPSSGVSSTKSMPGGIAKKAIDKQSRKERRCVVRQTPAGIQENTKLHLQPQVATAQQQFLVQNQLAVATTVSLDKTIEIDSETESNHDTALTLACAGGHEELVELLINRGANIEHRDKKGFTPLILAATAGHDKVVDILLKHSAELEAQSERTKDTPLSLACSGGRYEVVELLLSVGANKEHRNVSDYTPLSLAASGGYVNIIKLLLSHGAEINSRTGSKLGISPLMLAAMNGHTPAVKLLLDQGSDINAQIETNRNTALTLACFQGRHEVVSLLLDRRANVEHRAKTGLTPLMEAASGGYIEVGRVLLDKGADVNAAPVPTSRDTALTIAADKGHQKFVELLLSRNASVEVKNKKGNSPLWLAAHGGHLSVVELLYDHNADIDSQDNRRVSCLMAAFRKGHTKIVKWMVQYVSQFPSDQEMIRFIGTISDKELIDKCFDCMKILRSAKEAQAVKANKNASILLEELDLERTREESRKAAAARRRERKKKKKMEKKEEKRRQQQGNGPGGDDMQGDDDDASDKDDDSDKDDEDEEAAPAAAREEGDSGIDQGSCSSGDTKGARFGGSQSAQAAEAAANSVSTNSQGKKNKKQAKNKVLISVEPTQPVITSNSVLKGVCAKKHPAVEVVKQPPATQQAAPLKRQLDVKKEEPALKKKEEKNSSSSSSSKREKENLAPKEVALPAKQQPSSSSKLQSSESASNINSSTATNTSSANTTRKEVAKPASQTASATTLNPAKRTEVDGWKEVVRKSSAQQTTAVGASGAPLPVTATSSATSVQHHPHHHLANSSSNSSSSLTTSTTTAASSVPEMTCKKVQVPVNAISRVIGRGGSNINAIRATTGAHIEVEKQGKNQSERCITIKGLTDATKQAHMLILALIKDPDVDILQMLPRINSSIKQASSGGASTPMSVGTWDNRTAAGVNAYTFSSAASTTSTSSSSSASSTTPAGASYSNAHKQHQQQPQSVKGPSGRSSTSVKSNGSSTKVSASSGSGSRSGRAGSSYLAQQQPGRSSGGGSSNGVIKSKSESSSKSLPAAQKSSTTLGKSSTVSPGAQNFAKAAAIGQSSPKKAEGGATSAVVTSAGGRSSGVVAPFGRGKPVAGQGGPAATAASNVAQLGSVSGNSNILAGPIGTFNVADVAAVNAAAAAGAAAATNSNVKPIAPIAPPSKRVGSPTQVQQQHQTQQQQQQQLPQPAPVPGPQPQQQPLQQQQQQQAPQQQPQQPNQQQQPQTSQQNLVINTNLLNDLMAASAANTTSDSFSAQLAAKLSSAYSLFSDYQQSQWGKLGDPGIGGGAGAVGDGLPQADASKAPGYNRNILSSPVGSSKASSNHSTSPPVGNVIQQQQQQQPQSSQQALNIITSGPGGPATAPARSPMVSANEGNPAVGQPSMNGTQGLGETAPAHSPGVIKPPTATVPIQRHVPMPISAPEAGAPPTFGAIGSNPASGNNSAAAQAAAAAAASAMIDRQQQNLQNLQTLQNLQRMVGASQQQQPQQQLNYPMDPTSSFIVDANNVLRLNPRVIFPQGNTKPPQPPPQGGTQSNVFGGNPGRQPPGTGARQPGGAAAQRWYGGTLEYPSYTGRDMLHLENGAGGMAGMGSPSAMSPNHDDIRKMPRPIGTERAASWKYNNFNVGGPSLNMEDALASVLPPWAHELKAQPPGLQQPPPPPQSQQQQQQPLNWLKQQPQQQQYRAYNNGPYPQQQQQHEPMNMPMDYHNMQAPPNMSQQQQQHVNLMPSYGYQHFVGAPGAVDISAHMPDKMEVWDHHDKHMPWTNYTTNWSN</sequence>
<proteinExistence type="evidence at protein level"/>
<gene>
    <name evidence="13 15" type="primary">mask</name>
    <name type="ORF">CG33106</name>
</gene>
<organism>
    <name type="scientific">Drosophila melanogaster</name>
    <name type="common">Fruit fly</name>
    <dbReference type="NCBI Taxonomy" id="7227"/>
    <lineage>
        <taxon>Eukaryota</taxon>
        <taxon>Metazoa</taxon>
        <taxon>Ecdysozoa</taxon>
        <taxon>Arthropoda</taxon>
        <taxon>Hexapoda</taxon>
        <taxon>Insecta</taxon>
        <taxon>Pterygota</taxon>
        <taxon>Neoptera</taxon>
        <taxon>Endopterygota</taxon>
        <taxon>Diptera</taxon>
        <taxon>Brachycera</taxon>
        <taxon>Muscomorpha</taxon>
        <taxon>Ephydroidea</taxon>
        <taxon>Drosophilidae</taxon>
        <taxon>Drosophila</taxon>
        <taxon>Sophophora</taxon>
    </lineage>
</organism>
<dbReference type="EMBL" id="AF425651">
    <property type="protein sequence ID" value="AAL65911.1"/>
    <property type="molecule type" value="mRNA"/>
</dbReference>
<dbReference type="EMBL" id="AE014297">
    <property type="protein sequence ID" value="AAO41600.1"/>
    <property type="molecule type" value="Genomic_DNA"/>
</dbReference>
<dbReference type="EMBL" id="AE014297">
    <property type="protein sequence ID" value="AAO41601.1"/>
    <property type="molecule type" value="Genomic_DNA"/>
</dbReference>
<dbReference type="EMBL" id="BT011112">
    <property type="protein sequence ID" value="AAR82779.1"/>
    <property type="molecule type" value="mRNA"/>
</dbReference>
<dbReference type="EMBL" id="AY069323">
    <property type="protein sequence ID" value="AAL39468.1"/>
    <property type="status" value="ALT_SEQ"/>
    <property type="molecule type" value="mRNA"/>
</dbReference>
<dbReference type="EMBL" id="AY075578">
    <property type="protein sequence ID" value="AAL68383.1"/>
    <property type="status" value="ALT_INIT"/>
    <property type="molecule type" value="mRNA"/>
</dbReference>
<dbReference type="EMBL" id="AY094733">
    <property type="protein sequence ID" value="AAM11086.1"/>
    <property type="status" value="ALT_INIT"/>
    <property type="molecule type" value="mRNA"/>
</dbReference>
<dbReference type="RefSeq" id="NP_788733.1">
    <property type="nucleotide sequence ID" value="NM_176556.2"/>
</dbReference>
<dbReference type="RefSeq" id="NP_788734.1">
    <property type="nucleotide sequence ID" value="NM_176557.2"/>
</dbReference>
<dbReference type="SMR" id="Q9VCA8"/>
<dbReference type="BioGRID" id="72524">
    <property type="interactions" value="37"/>
</dbReference>
<dbReference type="DIP" id="DIP-22630N"/>
<dbReference type="FunCoup" id="Q9VCA8">
    <property type="interactions" value="1997"/>
</dbReference>
<dbReference type="IntAct" id="Q9VCA8">
    <property type="interactions" value="18"/>
</dbReference>
<dbReference type="MINT" id="Q9VCA8"/>
<dbReference type="STRING" id="7227.FBpp0293580"/>
<dbReference type="GlyGen" id="Q9VCA8">
    <property type="glycosylation" value="3 sites, 1 O-linked glycan (1 site)"/>
</dbReference>
<dbReference type="iPTMnet" id="Q9VCA8"/>
<dbReference type="PaxDb" id="7227-FBpp0293580"/>
<dbReference type="ABCD" id="Q9VCA8">
    <property type="antibodies" value="4 sequenced antibodies"/>
</dbReference>
<dbReference type="EnsemblMetazoa" id="FBtr0084562">
    <property type="protein sequence ID" value="FBpp0083947"/>
    <property type="gene ID" value="FBgn0043884"/>
</dbReference>
<dbReference type="EnsemblMetazoa" id="FBtr0084563">
    <property type="protein sequence ID" value="FBpp0083948"/>
    <property type="gene ID" value="FBgn0043884"/>
</dbReference>
<dbReference type="GeneID" id="50070"/>
<dbReference type="KEGG" id="dme:Dmel_CG33106"/>
<dbReference type="AGR" id="FB:FBgn0043884"/>
<dbReference type="CTD" id="50070"/>
<dbReference type="FlyBase" id="FBgn0043884">
    <property type="gene designation" value="mask"/>
</dbReference>
<dbReference type="VEuPathDB" id="VectorBase:FBgn0043884"/>
<dbReference type="eggNOG" id="KOG0504">
    <property type="taxonomic scope" value="Eukaryota"/>
</dbReference>
<dbReference type="eggNOG" id="KOG4369">
    <property type="taxonomic scope" value="Eukaryota"/>
</dbReference>
<dbReference type="GeneTree" id="ENSGT00940000174194"/>
<dbReference type="InParanoid" id="Q9VCA8"/>
<dbReference type="OrthoDB" id="10071877at2759"/>
<dbReference type="SignaLink" id="Q9VCA8"/>
<dbReference type="BioGRID-ORCS" id="50070">
    <property type="hits" value="1 hit in 3 CRISPR screens"/>
</dbReference>
<dbReference type="ChiTaRS" id="mask">
    <property type="organism name" value="fly"/>
</dbReference>
<dbReference type="GenomeRNAi" id="50070"/>
<dbReference type="PRO" id="PR:Q9VCA8"/>
<dbReference type="Proteomes" id="UP000000803">
    <property type="component" value="Chromosome 3R"/>
</dbReference>
<dbReference type="Bgee" id="FBgn0043884">
    <property type="expression patterns" value="Expressed in distal medullary amacrine neuron Dm11 in insect head and 300 other cell types or tissues"/>
</dbReference>
<dbReference type="ExpressionAtlas" id="Q9VCA8">
    <property type="expression patterns" value="baseline and differential"/>
</dbReference>
<dbReference type="GO" id="GO:0005737">
    <property type="term" value="C:cytoplasm"/>
    <property type="evidence" value="ECO:0007005"/>
    <property type="project" value="FlyBase"/>
</dbReference>
<dbReference type="GO" id="GO:0005829">
    <property type="term" value="C:cytosol"/>
    <property type="evidence" value="ECO:0000314"/>
    <property type="project" value="FlyBase"/>
</dbReference>
<dbReference type="GO" id="GO:0031430">
    <property type="term" value="C:M band"/>
    <property type="evidence" value="ECO:0000314"/>
    <property type="project" value="UniProtKB"/>
</dbReference>
<dbReference type="GO" id="GO:0005634">
    <property type="term" value="C:nucleus"/>
    <property type="evidence" value="ECO:0007005"/>
    <property type="project" value="FlyBase"/>
</dbReference>
<dbReference type="GO" id="GO:0090575">
    <property type="term" value="C:RNA polymerase II transcription regulator complex"/>
    <property type="evidence" value="ECO:0000353"/>
    <property type="project" value="FlyBase"/>
</dbReference>
<dbReference type="GO" id="GO:0030018">
    <property type="term" value="C:Z disc"/>
    <property type="evidence" value="ECO:0000314"/>
    <property type="project" value="UniProtKB"/>
</dbReference>
<dbReference type="GO" id="GO:0019901">
    <property type="term" value="F:protein kinase binding"/>
    <property type="evidence" value="ECO:0000353"/>
    <property type="project" value="UniProtKB"/>
</dbReference>
<dbReference type="GO" id="GO:0003723">
    <property type="term" value="F:RNA binding"/>
    <property type="evidence" value="ECO:0007669"/>
    <property type="project" value="UniProtKB-KW"/>
</dbReference>
<dbReference type="GO" id="GO:0001751">
    <property type="term" value="P:compound eye photoreceptor cell differentiation"/>
    <property type="evidence" value="ECO:0000315"/>
    <property type="project" value="FlyBase"/>
</dbReference>
<dbReference type="GO" id="GO:0046843">
    <property type="term" value="P:dorsal appendage formation"/>
    <property type="evidence" value="ECO:0000315"/>
    <property type="project" value="FlyBase"/>
</dbReference>
<dbReference type="GO" id="GO:0060361">
    <property type="term" value="P:flight"/>
    <property type="evidence" value="ECO:0000315"/>
    <property type="project" value="UniProtKB"/>
</dbReference>
<dbReference type="GO" id="GO:0045087">
    <property type="term" value="P:innate immune response"/>
    <property type="evidence" value="ECO:0000318"/>
    <property type="project" value="GO_Central"/>
</dbReference>
<dbReference type="GO" id="GO:0007005">
    <property type="term" value="P:mitochondrion organization"/>
    <property type="evidence" value="ECO:0000315"/>
    <property type="project" value="FlyBase"/>
</dbReference>
<dbReference type="GO" id="GO:1903147">
    <property type="term" value="P:negative regulation of autophagy of mitochondrion"/>
    <property type="evidence" value="ECO:0000315"/>
    <property type="project" value="FlyBase"/>
</dbReference>
<dbReference type="GO" id="GO:0090212">
    <property type="term" value="P:negative regulation of establishment of blood-brain barrier"/>
    <property type="evidence" value="ECO:0000315"/>
    <property type="project" value="FlyBase"/>
</dbReference>
<dbReference type="GO" id="GO:0046427">
    <property type="term" value="P:positive regulation of receptor signaling pathway via JAK-STAT"/>
    <property type="evidence" value="ECO:0000316"/>
    <property type="project" value="FlyBase"/>
</dbReference>
<dbReference type="GO" id="GO:0045874">
    <property type="term" value="P:positive regulation of sevenless signaling pathway"/>
    <property type="evidence" value="ECO:0000316"/>
    <property type="project" value="FlyBase"/>
</dbReference>
<dbReference type="GO" id="GO:0045944">
    <property type="term" value="P:positive regulation of transcription by RNA polymerase II"/>
    <property type="evidence" value="ECO:0000316"/>
    <property type="project" value="FlyBase"/>
</dbReference>
<dbReference type="GO" id="GO:0045214">
    <property type="term" value="P:sarcomere organization"/>
    <property type="evidence" value="ECO:0000315"/>
    <property type="project" value="FlyBase"/>
</dbReference>
<dbReference type="GO" id="GO:0048010">
    <property type="term" value="P:vascular endothelial growth factor receptor signaling pathway"/>
    <property type="evidence" value="ECO:0000316"/>
    <property type="project" value="FlyBase"/>
</dbReference>
<dbReference type="GO" id="GO:0044319">
    <property type="term" value="P:wound healing, spreading of cells"/>
    <property type="evidence" value="ECO:0000316"/>
    <property type="project" value="FlyBase"/>
</dbReference>
<dbReference type="GO" id="GO:0035313">
    <property type="term" value="P:wound healing, spreading of epidermal cells"/>
    <property type="evidence" value="ECO:0000316"/>
    <property type="project" value="FlyBase"/>
</dbReference>
<dbReference type="CDD" id="cd22404">
    <property type="entry name" value="KH-I_MASK"/>
    <property type="match status" value="1"/>
</dbReference>
<dbReference type="FunFam" id="1.25.40.20:FF:000046">
    <property type="entry name" value="Ankyrin repeat and KH domain-containing protein 1"/>
    <property type="match status" value="1"/>
</dbReference>
<dbReference type="FunFam" id="1.25.40.20:FF:000804">
    <property type="entry name" value="Ankyrin repeat and KH domain-containing protein mask"/>
    <property type="match status" value="1"/>
</dbReference>
<dbReference type="FunFam" id="1.25.40.20:FF:000012">
    <property type="entry name" value="ankyrin repeat domain-containing protein 17 isoform X1"/>
    <property type="match status" value="1"/>
</dbReference>
<dbReference type="FunFam" id="1.25.40.20:FF:000055">
    <property type="entry name" value="ankyrin repeat domain-containing protein 17 isoform X2"/>
    <property type="match status" value="1"/>
</dbReference>
<dbReference type="FunFam" id="1.25.40.20:FF:000695">
    <property type="entry name" value="Multiple ankyrin repeats single KH domain, isoform E"/>
    <property type="match status" value="1"/>
</dbReference>
<dbReference type="Gene3D" id="1.25.40.20">
    <property type="entry name" value="Ankyrin repeat-containing domain"/>
    <property type="match status" value="7"/>
</dbReference>
<dbReference type="Gene3D" id="3.30.1370.10">
    <property type="entry name" value="K Homology domain, type 1"/>
    <property type="match status" value="1"/>
</dbReference>
<dbReference type="InterPro" id="IPR051631">
    <property type="entry name" value="Ankyrin-KH/SAM_domain"/>
</dbReference>
<dbReference type="InterPro" id="IPR002110">
    <property type="entry name" value="Ankyrin_rpt"/>
</dbReference>
<dbReference type="InterPro" id="IPR036770">
    <property type="entry name" value="Ankyrin_rpt-contain_sf"/>
</dbReference>
<dbReference type="InterPro" id="IPR047373">
    <property type="entry name" value="KH-I_MASK"/>
</dbReference>
<dbReference type="InterPro" id="IPR004087">
    <property type="entry name" value="KH_dom"/>
</dbReference>
<dbReference type="InterPro" id="IPR004088">
    <property type="entry name" value="KH_dom_type_1"/>
</dbReference>
<dbReference type="InterPro" id="IPR036612">
    <property type="entry name" value="KH_dom_type_1_sf"/>
</dbReference>
<dbReference type="PANTHER" id="PTHR23206:SF8">
    <property type="entry name" value="ANKYRIN REPEAT AND KH DOMAIN-CONTAINING 1"/>
    <property type="match status" value="1"/>
</dbReference>
<dbReference type="PANTHER" id="PTHR23206">
    <property type="entry name" value="MASK PROTEIN"/>
    <property type="match status" value="1"/>
</dbReference>
<dbReference type="Pfam" id="PF12796">
    <property type="entry name" value="Ank_2"/>
    <property type="match status" value="9"/>
</dbReference>
<dbReference type="Pfam" id="PF00013">
    <property type="entry name" value="KH_1"/>
    <property type="match status" value="1"/>
</dbReference>
<dbReference type="PRINTS" id="PR01415">
    <property type="entry name" value="ANKYRIN"/>
</dbReference>
<dbReference type="SMART" id="SM00248">
    <property type="entry name" value="ANK"/>
    <property type="match status" value="25"/>
</dbReference>
<dbReference type="SMART" id="SM00322">
    <property type="entry name" value="KH"/>
    <property type="match status" value="1"/>
</dbReference>
<dbReference type="SUPFAM" id="SSF48403">
    <property type="entry name" value="Ankyrin repeat"/>
    <property type="match status" value="3"/>
</dbReference>
<dbReference type="SUPFAM" id="SSF54791">
    <property type="entry name" value="Eukaryotic type KH-domain (KH-domain type I)"/>
    <property type="match status" value="1"/>
</dbReference>
<dbReference type="PROSITE" id="PS50297">
    <property type="entry name" value="ANK_REP_REGION"/>
    <property type="match status" value="2"/>
</dbReference>
<dbReference type="PROSITE" id="PS50088">
    <property type="entry name" value="ANK_REPEAT"/>
    <property type="match status" value="20"/>
</dbReference>
<dbReference type="PROSITE" id="PS50084">
    <property type="entry name" value="KH_TYPE_1"/>
    <property type="match status" value="1"/>
</dbReference>
<feature type="chain" id="PRO_0000312681" description="Ankyrin repeat and KH domain-containing protein mask">
    <location>
        <begin position="1"/>
        <end position="4001"/>
    </location>
</feature>
<feature type="repeat" description="ANK 1" evidence="1">
    <location>
        <begin position="546"/>
        <end position="575"/>
    </location>
</feature>
<feature type="repeat" description="ANK 2" evidence="1">
    <location>
        <begin position="584"/>
        <end position="614"/>
    </location>
</feature>
<feature type="repeat" description="ANK 3" evidence="1">
    <location>
        <begin position="618"/>
        <end position="647"/>
    </location>
</feature>
<feature type="repeat" description="ANK 4" evidence="1">
    <location>
        <begin position="651"/>
        <end position="680"/>
    </location>
</feature>
<feature type="repeat" description="ANK 5" evidence="1">
    <location>
        <begin position="684"/>
        <end position="713"/>
    </location>
</feature>
<feature type="repeat" description="ANK 6" evidence="1">
    <location>
        <begin position="718"/>
        <end position="747"/>
    </location>
</feature>
<feature type="repeat" description="ANK 7" evidence="1">
    <location>
        <begin position="751"/>
        <end position="780"/>
    </location>
</feature>
<feature type="repeat" description="ANK 8" evidence="1">
    <location>
        <begin position="784"/>
        <end position="813"/>
    </location>
</feature>
<feature type="repeat" description="ANK 9" evidence="1">
    <location>
        <begin position="817"/>
        <end position="846"/>
    </location>
</feature>
<feature type="repeat" description="ANK 10" evidence="1">
    <location>
        <begin position="851"/>
        <end position="880"/>
    </location>
</feature>
<feature type="repeat" description="ANK 11" evidence="1">
    <location>
        <begin position="881"/>
        <end position="910"/>
    </location>
</feature>
<feature type="repeat" description="ANK 12" evidence="1">
    <location>
        <begin position="914"/>
        <end position="943"/>
    </location>
</feature>
<feature type="repeat" description="ANK 13" evidence="1">
    <location>
        <begin position="947"/>
        <end position="976"/>
    </location>
</feature>
<feature type="repeat" description="ANK 14" evidence="1">
    <location>
        <begin position="981"/>
        <end position="1011"/>
    </location>
</feature>
<feature type="repeat" description="ANK 15" evidence="1">
    <location>
        <begin position="1014"/>
        <end position="1043"/>
    </location>
</feature>
<feature type="repeat" description="ANK 16" evidence="1">
    <location>
        <begin position="2312"/>
        <end position="2341"/>
    </location>
</feature>
<feature type="repeat" description="ANK 17" evidence="1">
    <location>
        <begin position="2345"/>
        <end position="2374"/>
    </location>
</feature>
<feature type="repeat" description="ANK 18" evidence="1">
    <location>
        <begin position="2379"/>
        <end position="2408"/>
    </location>
</feature>
<feature type="repeat" description="ANK 19" evidence="1">
    <location>
        <begin position="2412"/>
        <end position="2441"/>
    </location>
</feature>
<feature type="repeat" description="ANK 20" evidence="1">
    <location>
        <begin position="2447"/>
        <end position="2476"/>
    </location>
</feature>
<feature type="repeat" description="ANK 21" evidence="1">
    <location>
        <begin position="2481"/>
        <end position="2510"/>
    </location>
</feature>
<feature type="repeat" description="ANK 22" evidence="1">
    <location>
        <begin position="2514"/>
        <end position="2543"/>
    </location>
</feature>
<feature type="repeat" description="ANK 23" evidence="1">
    <location>
        <begin position="2549"/>
        <end position="2578"/>
    </location>
</feature>
<feature type="repeat" description="ANK 24" evidence="1">
    <location>
        <begin position="2582"/>
        <end position="2611"/>
    </location>
</feature>
<feature type="repeat" description="ANK 25" evidence="1">
    <location>
        <begin position="2615"/>
        <end position="2644"/>
    </location>
</feature>
<feature type="domain" description="KH" evidence="2">
    <location>
        <begin position="3036"/>
        <end position="3100"/>
    </location>
</feature>
<feature type="region of interest" description="Disordered" evidence="3">
    <location>
        <begin position="1"/>
        <end position="61"/>
    </location>
</feature>
<feature type="region of interest" description="Disordered" evidence="3">
    <location>
        <begin position="91"/>
        <end position="174"/>
    </location>
</feature>
<feature type="region of interest" description="Disordered" evidence="3">
    <location>
        <begin position="391"/>
        <end position="494"/>
    </location>
</feature>
<feature type="region of interest" description="Disordered" evidence="3">
    <location>
        <begin position="1046"/>
        <end position="1067"/>
    </location>
</feature>
<feature type="region of interest" description="Disordered" evidence="3">
    <location>
        <begin position="1306"/>
        <end position="1376"/>
    </location>
</feature>
<feature type="region of interest" description="Disordered" evidence="3">
    <location>
        <begin position="1583"/>
        <end position="1612"/>
    </location>
</feature>
<feature type="region of interest" description="Disordered" evidence="3">
    <location>
        <begin position="1646"/>
        <end position="1669"/>
    </location>
</feature>
<feature type="region of interest" description="Disordered" evidence="3">
    <location>
        <begin position="1682"/>
        <end position="1779"/>
    </location>
</feature>
<feature type="region of interest" description="Disordered" evidence="3">
    <location>
        <begin position="1852"/>
        <end position="1872"/>
    </location>
</feature>
<feature type="region of interest" description="Disordered" evidence="3">
    <location>
        <begin position="2084"/>
        <end position="2108"/>
    </location>
</feature>
<feature type="region of interest" description="Disordered" evidence="3">
    <location>
        <begin position="2225"/>
        <end position="2256"/>
    </location>
</feature>
<feature type="region of interest" description="Disordered" evidence="3">
    <location>
        <begin position="2699"/>
        <end position="3033"/>
    </location>
</feature>
<feature type="region of interest" description="Disordered" evidence="3">
    <location>
        <begin position="3156"/>
        <end position="3329"/>
    </location>
</feature>
<feature type="region of interest" description="Disordered" evidence="3">
    <location>
        <begin position="3383"/>
        <end position="3457"/>
    </location>
</feature>
<feature type="region of interest" description="Disordered" evidence="3">
    <location>
        <begin position="3520"/>
        <end position="3636"/>
    </location>
</feature>
<feature type="region of interest" description="Disordered" evidence="3">
    <location>
        <begin position="3744"/>
        <end position="3786"/>
    </location>
</feature>
<feature type="region of interest" description="Disordered" evidence="3">
    <location>
        <begin position="3876"/>
        <end position="3945"/>
    </location>
</feature>
<feature type="coiled-coil region" evidence="1">
    <location>
        <begin position="2674"/>
        <end position="2732"/>
    </location>
</feature>
<feature type="compositionally biased region" description="Basic and acidic residues" evidence="3">
    <location>
        <begin position="1"/>
        <end position="14"/>
    </location>
</feature>
<feature type="compositionally biased region" description="Polar residues" evidence="3">
    <location>
        <begin position="15"/>
        <end position="30"/>
    </location>
</feature>
<feature type="compositionally biased region" description="Low complexity" evidence="3">
    <location>
        <begin position="38"/>
        <end position="61"/>
    </location>
</feature>
<feature type="compositionally biased region" description="Polar residues" evidence="3">
    <location>
        <begin position="94"/>
        <end position="117"/>
    </location>
</feature>
<feature type="compositionally biased region" description="Low complexity" evidence="3">
    <location>
        <begin position="118"/>
        <end position="159"/>
    </location>
</feature>
<feature type="compositionally biased region" description="Gly residues" evidence="3">
    <location>
        <begin position="160"/>
        <end position="174"/>
    </location>
</feature>
<feature type="compositionally biased region" description="Acidic residues" evidence="3">
    <location>
        <begin position="408"/>
        <end position="425"/>
    </location>
</feature>
<feature type="compositionally biased region" description="Acidic residues" evidence="3">
    <location>
        <begin position="434"/>
        <end position="486"/>
    </location>
</feature>
<feature type="compositionally biased region" description="Polar residues" evidence="3">
    <location>
        <begin position="1367"/>
        <end position="1376"/>
    </location>
</feature>
<feature type="compositionally biased region" description="Acidic residues" evidence="3">
    <location>
        <begin position="1646"/>
        <end position="1657"/>
    </location>
</feature>
<feature type="compositionally biased region" description="Acidic residues" evidence="3">
    <location>
        <begin position="1685"/>
        <end position="1704"/>
    </location>
</feature>
<feature type="compositionally biased region" description="Acidic residues" evidence="3">
    <location>
        <begin position="1716"/>
        <end position="1759"/>
    </location>
</feature>
<feature type="compositionally biased region" description="Low complexity" evidence="3">
    <location>
        <begin position="1760"/>
        <end position="1776"/>
    </location>
</feature>
<feature type="compositionally biased region" description="Low complexity" evidence="3">
    <location>
        <begin position="2084"/>
        <end position="2093"/>
    </location>
</feature>
<feature type="compositionally biased region" description="Polar residues" evidence="3">
    <location>
        <begin position="2228"/>
        <end position="2237"/>
    </location>
</feature>
<feature type="compositionally biased region" description="Basic residues" evidence="3">
    <location>
        <begin position="2706"/>
        <end position="2719"/>
    </location>
</feature>
<feature type="compositionally biased region" description="Acidic residues" evidence="3">
    <location>
        <begin position="2739"/>
        <end position="2762"/>
    </location>
</feature>
<feature type="compositionally biased region" description="Low complexity" evidence="3">
    <location>
        <begin position="2793"/>
        <end position="2810"/>
    </location>
</feature>
<feature type="compositionally biased region" description="Polar residues" evidence="3">
    <location>
        <begin position="2828"/>
        <end position="2839"/>
    </location>
</feature>
<feature type="compositionally biased region" description="Basic and acidic residues" evidence="3">
    <location>
        <begin position="2868"/>
        <end position="2886"/>
    </location>
</feature>
<feature type="compositionally biased region" description="Low complexity" evidence="3">
    <location>
        <begin position="2906"/>
        <end position="2941"/>
    </location>
</feature>
<feature type="compositionally biased region" description="Polar residues" evidence="3">
    <location>
        <begin position="2950"/>
        <end position="2960"/>
    </location>
</feature>
<feature type="compositionally biased region" description="Basic and acidic residues" evidence="3">
    <location>
        <begin position="2963"/>
        <end position="2975"/>
    </location>
</feature>
<feature type="compositionally biased region" description="Polar residues" evidence="3">
    <location>
        <begin position="2995"/>
        <end position="3004"/>
    </location>
</feature>
<feature type="compositionally biased region" description="Low complexity" evidence="3">
    <location>
        <begin position="3012"/>
        <end position="3032"/>
    </location>
</feature>
<feature type="compositionally biased region" description="Low complexity" evidence="3">
    <location>
        <begin position="3156"/>
        <end position="3178"/>
    </location>
</feature>
<feature type="compositionally biased region" description="Low complexity" evidence="3">
    <location>
        <begin position="3195"/>
        <end position="3227"/>
    </location>
</feature>
<feature type="compositionally biased region" description="Low complexity" evidence="3">
    <location>
        <begin position="3244"/>
        <end position="3257"/>
    </location>
</feature>
<feature type="compositionally biased region" description="Polar residues" evidence="3">
    <location>
        <begin position="3262"/>
        <end position="3278"/>
    </location>
</feature>
<feature type="compositionally biased region" description="Low complexity" evidence="3">
    <location>
        <begin position="3396"/>
        <end position="3416"/>
    </location>
</feature>
<feature type="compositionally biased region" description="Pro residues" evidence="3">
    <location>
        <begin position="3417"/>
        <end position="3427"/>
    </location>
</feature>
<feature type="compositionally biased region" description="Low complexity" evidence="3">
    <location>
        <begin position="3428"/>
        <end position="3457"/>
    </location>
</feature>
<feature type="compositionally biased region" description="Polar residues" evidence="3">
    <location>
        <begin position="3539"/>
        <end position="3559"/>
    </location>
</feature>
<feature type="compositionally biased region" description="Low complexity" evidence="3">
    <location>
        <begin position="3565"/>
        <end position="3577"/>
    </location>
</feature>
<feature type="compositionally biased region" description="Low complexity" evidence="3">
    <location>
        <begin position="3774"/>
        <end position="3786"/>
    </location>
</feature>
<feature type="compositionally biased region" description="Low complexity" evidence="3">
    <location>
        <begin position="3891"/>
        <end position="3910"/>
    </location>
</feature>
<feature type="modified residue" description="Phosphoserine" evidence="7 8">
    <location>
        <position position="501"/>
    </location>
</feature>
<feature type="modified residue" description="Phosphoserine" evidence="7">
    <location>
        <position position="1389"/>
    </location>
</feature>
<feature type="modified residue" description="Phosphoserine" evidence="8">
    <location>
        <position position="1588"/>
    </location>
</feature>
<feature type="modified residue" description="Phosphoserine" evidence="8">
    <location>
        <position position="2687"/>
    </location>
</feature>
<feature type="modified residue" description="Phosphothreonine" evidence="8">
    <location>
        <position position="2698"/>
    </location>
</feature>
<feature type="modified residue" description="Phosphoserine" evidence="8">
    <location>
        <position position="2747"/>
    </location>
</feature>
<feature type="modified residue" description="Phosphoserine" evidence="8">
    <location>
        <position position="2753"/>
    </location>
</feature>
<feature type="modified residue" description="Phosphoserine" evidence="8">
    <location>
        <position position="3596"/>
    </location>
</feature>
<feature type="modified residue" description="Phosphoserine" evidence="8">
    <location>
        <position position="3820"/>
    </location>
</feature>
<feature type="modified residue" description="Phosphoserine" evidence="8">
    <location>
        <position position="3822"/>
    </location>
</feature>
<feature type="modified residue" description="Phosphoserine" evidence="8">
    <location>
        <position position="3825"/>
    </location>
</feature>
<feature type="sequence conflict" description="In Ref. 1; AAL65911." evidence="10" ref="1">
    <original>N</original>
    <variation>T</variation>
    <location>
        <position position="2886"/>
    </location>
</feature>
<feature type="sequence conflict" description="In Ref. 5; AAL68383." evidence="10" ref="5">
    <original>A</original>
    <variation>G</variation>
    <location>
        <position position="3307"/>
    </location>
</feature>
<feature type="sequence conflict" description="In Ref. 5; AAL68383." evidence="10" ref="5">
    <original>V</original>
    <variation>A</variation>
    <location>
        <position position="3401"/>
    </location>
</feature>
<feature type="sequence conflict" description="In Ref. 4; AAR82779." evidence="10" ref="4">
    <original>Q</original>
    <variation>H</variation>
    <location>
        <position position="3408"/>
    </location>
</feature>
<feature type="sequence conflict" description="In Ref. 4; AAR82779." evidence="10" ref="4">
    <original>L</original>
    <variation>Q</variation>
    <location>
        <position position="3415"/>
    </location>
</feature>
<feature type="sequence conflict" description="In Ref. 5; AAL68383." evidence="10" ref="5">
    <original>PL</original>
    <variation>QPHQQQ</variation>
    <location>
        <begin position="3430"/>
        <end position="3431"/>
    </location>
</feature>
<feature type="sequence conflict" description="In Ref. 5; AAL68383." evidence="10" ref="5">
    <original>S</original>
    <variation>N</variation>
    <location>
        <position position="3474"/>
    </location>
</feature>
<feature type="sequence conflict" description="In Ref. 5; AAL68383." evidence="10" ref="5">
    <original>A</original>
    <variation>V</variation>
    <location>
        <position position="3578"/>
    </location>
</feature>
<evidence type="ECO:0000255" key="1"/>
<evidence type="ECO:0000255" key="2">
    <source>
        <dbReference type="PROSITE-ProRule" id="PRU00117"/>
    </source>
</evidence>
<evidence type="ECO:0000256" key="3">
    <source>
        <dbReference type="SAM" id="MobiDB-lite"/>
    </source>
</evidence>
<evidence type="ECO:0000269" key="4">
    <source>
    </source>
</evidence>
<evidence type="ECO:0000269" key="5">
    <source>
    </source>
</evidence>
<evidence type="ECO:0000269" key="6">
    <source>
    </source>
</evidence>
<evidence type="ECO:0000269" key="7">
    <source>
    </source>
</evidence>
<evidence type="ECO:0000269" key="8">
    <source>
    </source>
</evidence>
<evidence type="ECO:0000269" key="9">
    <source>
    </source>
</evidence>
<evidence type="ECO:0000305" key="10"/>
<evidence type="ECO:0000312" key="11">
    <source>
        <dbReference type="EMBL" id="AAL65911.1"/>
    </source>
</evidence>
<evidence type="ECO:0000312" key="12">
    <source>
        <dbReference type="EMBL" id="AAM11086.1"/>
    </source>
</evidence>
<evidence type="ECO:0000312" key="13">
    <source>
        <dbReference type="EMBL" id="AAO41600.1"/>
    </source>
</evidence>
<evidence type="ECO:0000312" key="14">
    <source>
        <dbReference type="EMBL" id="AAR82779.1"/>
    </source>
</evidence>
<evidence type="ECO:0000312" key="15">
    <source>
        <dbReference type="FlyBase" id="FBgn0043884"/>
    </source>
</evidence>
<reference evidence="10 11" key="1">
    <citation type="journal article" date="2002" name="Development">
        <title>MASK, a large ankyrin repeat and KH domain-containing protein involved in Drosophila receptor tyrosine kinase signaling.</title>
        <authorList>
            <person name="Smith R.K."/>
            <person name="Carroll P.M."/>
            <person name="Allard J.D."/>
            <person name="Simon M.A."/>
        </authorList>
    </citation>
    <scope>NUCLEOTIDE SEQUENCE [MRNA]</scope>
    <scope>FUNCTION</scope>
    <scope>SUBCELLULAR LOCATION</scope>
    <scope>TISSUE SPECIFICITY</scope>
    <scope>DISRUPTION PHENOTYPE</scope>
</reference>
<reference evidence="13" key="2">
    <citation type="journal article" date="2000" name="Science">
        <title>The genome sequence of Drosophila melanogaster.</title>
        <authorList>
            <person name="Adams M.D."/>
            <person name="Celniker S.E."/>
            <person name="Holt R.A."/>
            <person name="Evans C.A."/>
            <person name="Gocayne J.D."/>
            <person name="Amanatides P.G."/>
            <person name="Scherer S.E."/>
            <person name="Li P.W."/>
            <person name="Hoskins R.A."/>
            <person name="Galle R.F."/>
            <person name="George R.A."/>
            <person name="Lewis S.E."/>
            <person name="Richards S."/>
            <person name="Ashburner M."/>
            <person name="Henderson S.N."/>
            <person name="Sutton G.G."/>
            <person name="Wortman J.R."/>
            <person name="Yandell M.D."/>
            <person name="Zhang Q."/>
            <person name="Chen L.X."/>
            <person name="Brandon R.C."/>
            <person name="Rogers Y.-H.C."/>
            <person name="Blazej R.G."/>
            <person name="Champe M."/>
            <person name="Pfeiffer B.D."/>
            <person name="Wan K.H."/>
            <person name="Doyle C."/>
            <person name="Baxter E.G."/>
            <person name="Helt G."/>
            <person name="Nelson C.R."/>
            <person name="Miklos G.L.G."/>
            <person name="Abril J.F."/>
            <person name="Agbayani A."/>
            <person name="An H.-J."/>
            <person name="Andrews-Pfannkoch C."/>
            <person name="Baldwin D."/>
            <person name="Ballew R.M."/>
            <person name="Basu A."/>
            <person name="Baxendale J."/>
            <person name="Bayraktaroglu L."/>
            <person name="Beasley E.M."/>
            <person name="Beeson K.Y."/>
            <person name="Benos P.V."/>
            <person name="Berman B.P."/>
            <person name="Bhandari D."/>
            <person name="Bolshakov S."/>
            <person name="Borkova D."/>
            <person name="Botchan M.R."/>
            <person name="Bouck J."/>
            <person name="Brokstein P."/>
            <person name="Brottier P."/>
            <person name="Burtis K.C."/>
            <person name="Busam D.A."/>
            <person name="Butler H."/>
            <person name="Cadieu E."/>
            <person name="Center A."/>
            <person name="Chandra I."/>
            <person name="Cherry J.M."/>
            <person name="Cawley S."/>
            <person name="Dahlke C."/>
            <person name="Davenport L.B."/>
            <person name="Davies P."/>
            <person name="de Pablos B."/>
            <person name="Delcher A."/>
            <person name="Deng Z."/>
            <person name="Mays A.D."/>
            <person name="Dew I."/>
            <person name="Dietz S.M."/>
            <person name="Dodson K."/>
            <person name="Doup L.E."/>
            <person name="Downes M."/>
            <person name="Dugan-Rocha S."/>
            <person name="Dunkov B.C."/>
            <person name="Dunn P."/>
            <person name="Durbin K.J."/>
            <person name="Evangelista C.C."/>
            <person name="Ferraz C."/>
            <person name="Ferriera S."/>
            <person name="Fleischmann W."/>
            <person name="Fosler C."/>
            <person name="Gabrielian A.E."/>
            <person name="Garg N.S."/>
            <person name="Gelbart W.M."/>
            <person name="Glasser K."/>
            <person name="Glodek A."/>
            <person name="Gong F."/>
            <person name="Gorrell J.H."/>
            <person name="Gu Z."/>
            <person name="Guan P."/>
            <person name="Harris M."/>
            <person name="Harris N.L."/>
            <person name="Harvey D.A."/>
            <person name="Heiman T.J."/>
            <person name="Hernandez J.R."/>
            <person name="Houck J."/>
            <person name="Hostin D."/>
            <person name="Houston K.A."/>
            <person name="Howland T.J."/>
            <person name="Wei M.-H."/>
            <person name="Ibegwam C."/>
            <person name="Jalali M."/>
            <person name="Kalush F."/>
            <person name="Karpen G.H."/>
            <person name="Ke Z."/>
            <person name="Kennison J.A."/>
            <person name="Ketchum K.A."/>
            <person name="Kimmel B.E."/>
            <person name="Kodira C.D."/>
            <person name="Kraft C.L."/>
            <person name="Kravitz S."/>
            <person name="Kulp D."/>
            <person name="Lai Z."/>
            <person name="Lasko P."/>
            <person name="Lei Y."/>
            <person name="Levitsky A.A."/>
            <person name="Li J.H."/>
            <person name="Li Z."/>
            <person name="Liang Y."/>
            <person name="Lin X."/>
            <person name="Liu X."/>
            <person name="Mattei B."/>
            <person name="McIntosh T.C."/>
            <person name="McLeod M.P."/>
            <person name="McPherson D."/>
            <person name="Merkulov G."/>
            <person name="Milshina N.V."/>
            <person name="Mobarry C."/>
            <person name="Morris J."/>
            <person name="Moshrefi A."/>
            <person name="Mount S.M."/>
            <person name="Moy M."/>
            <person name="Murphy B."/>
            <person name="Murphy L."/>
            <person name="Muzny D.M."/>
            <person name="Nelson D.L."/>
            <person name="Nelson D.R."/>
            <person name="Nelson K.A."/>
            <person name="Nixon K."/>
            <person name="Nusskern D.R."/>
            <person name="Pacleb J.M."/>
            <person name="Palazzolo M."/>
            <person name="Pittman G.S."/>
            <person name="Pan S."/>
            <person name="Pollard J."/>
            <person name="Puri V."/>
            <person name="Reese M.G."/>
            <person name="Reinert K."/>
            <person name="Remington K."/>
            <person name="Saunders R.D.C."/>
            <person name="Scheeler F."/>
            <person name="Shen H."/>
            <person name="Shue B.C."/>
            <person name="Siden-Kiamos I."/>
            <person name="Simpson M."/>
            <person name="Skupski M.P."/>
            <person name="Smith T.J."/>
            <person name="Spier E."/>
            <person name="Spradling A.C."/>
            <person name="Stapleton M."/>
            <person name="Strong R."/>
            <person name="Sun E."/>
            <person name="Svirskas R."/>
            <person name="Tector C."/>
            <person name="Turner R."/>
            <person name="Venter E."/>
            <person name="Wang A.H."/>
            <person name="Wang X."/>
            <person name="Wang Z.-Y."/>
            <person name="Wassarman D.A."/>
            <person name="Weinstock G.M."/>
            <person name="Weissenbach J."/>
            <person name="Williams S.M."/>
            <person name="Woodage T."/>
            <person name="Worley K.C."/>
            <person name="Wu D."/>
            <person name="Yang S."/>
            <person name="Yao Q.A."/>
            <person name="Ye J."/>
            <person name="Yeh R.-F."/>
            <person name="Zaveri J.S."/>
            <person name="Zhan M."/>
            <person name="Zhang G."/>
            <person name="Zhao Q."/>
            <person name="Zheng L."/>
            <person name="Zheng X.H."/>
            <person name="Zhong F.N."/>
            <person name="Zhong W."/>
            <person name="Zhou X."/>
            <person name="Zhu S.C."/>
            <person name="Zhu X."/>
            <person name="Smith H.O."/>
            <person name="Gibbs R.A."/>
            <person name="Myers E.W."/>
            <person name="Rubin G.M."/>
            <person name="Venter J.C."/>
        </authorList>
    </citation>
    <scope>NUCLEOTIDE SEQUENCE [LARGE SCALE GENOMIC DNA]</scope>
    <source>
        <strain evidence="4">Berkeley</strain>
    </source>
</reference>
<reference evidence="10 13" key="3">
    <citation type="journal article" date="2002" name="Genome Biol.">
        <title>Annotation of the Drosophila melanogaster euchromatic genome: a systematic review.</title>
        <authorList>
            <person name="Misra S."/>
            <person name="Crosby M.A."/>
            <person name="Mungall C.J."/>
            <person name="Matthews B.B."/>
            <person name="Campbell K.S."/>
            <person name="Hradecky P."/>
            <person name="Huang Y."/>
            <person name="Kaminker J.S."/>
            <person name="Millburn G.H."/>
            <person name="Prochnik S.E."/>
            <person name="Smith C.D."/>
            <person name="Tupy J.L."/>
            <person name="Whitfield E.J."/>
            <person name="Bayraktaroglu L."/>
            <person name="Berman B.P."/>
            <person name="Bettencourt B.R."/>
            <person name="Celniker S.E."/>
            <person name="de Grey A.D.N.J."/>
            <person name="Drysdale R.A."/>
            <person name="Harris N.L."/>
            <person name="Richter J."/>
            <person name="Russo S."/>
            <person name="Schroeder A.J."/>
            <person name="Shu S.Q."/>
            <person name="Stapleton M."/>
            <person name="Yamada C."/>
            <person name="Ashburner M."/>
            <person name="Gelbart W.M."/>
            <person name="Rubin G.M."/>
            <person name="Lewis S.E."/>
        </authorList>
    </citation>
    <scope>GENOME REANNOTATION</scope>
    <source>
        <strain>Berkeley</strain>
    </source>
</reference>
<reference evidence="10 14" key="4">
    <citation type="submission" date="2003-12" db="EMBL/GenBank/DDBJ databases">
        <authorList>
            <person name="Stapleton M."/>
            <person name="Brokstein P."/>
            <person name="Hong L."/>
            <person name="Agbayani A."/>
            <person name="Carlson J.W."/>
            <person name="Champe M."/>
            <person name="Chavez C."/>
            <person name="Dorsett V."/>
            <person name="Dresnek D."/>
            <person name="Farfan D."/>
            <person name="Frise E."/>
            <person name="George R.A."/>
            <person name="Gonzalez M."/>
            <person name="Guarin H."/>
            <person name="Kronmiller B."/>
            <person name="Li P.W."/>
            <person name="Liao G."/>
            <person name="Miranda A."/>
            <person name="Mungall C.J."/>
            <person name="Nunoo J."/>
            <person name="Pacleb J.M."/>
            <person name="Paragas V."/>
            <person name="Park S."/>
            <person name="Patel S."/>
            <person name="Phouanenavong S."/>
            <person name="Wan K.H."/>
            <person name="Yu C."/>
            <person name="Lewis S.E."/>
            <person name="Rubin G.M."/>
            <person name="Celniker S.E."/>
        </authorList>
    </citation>
    <scope>NUCLEOTIDE SEQUENCE [LARGE SCALE MRNA] OF 565-4001</scope>
    <source>
        <strain evidence="14">Berkeley</strain>
        <tissue>Embryo</tissue>
    </source>
</reference>
<reference evidence="10 12" key="5">
    <citation type="journal article" date="2002" name="Genome Biol.">
        <title>A Drosophila full-length cDNA resource.</title>
        <authorList>
            <person name="Stapleton M."/>
            <person name="Carlson J.W."/>
            <person name="Brokstein P."/>
            <person name="Yu C."/>
            <person name="Champe M."/>
            <person name="George R.A."/>
            <person name="Guarin H."/>
            <person name="Kronmiller B."/>
            <person name="Pacleb J.M."/>
            <person name="Park S."/>
            <person name="Wan K.H."/>
            <person name="Rubin G.M."/>
            <person name="Celniker S.E."/>
        </authorList>
    </citation>
    <scope>NUCLEOTIDE SEQUENCE [LARGE SCALE MRNA] OF 2024-2883 AND 3301-4001</scope>
    <source>
        <strain evidence="12">Berkeley</strain>
        <tissue evidence="6">Embryo</tissue>
        <tissue evidence="6">Head</tissue>
    </source>
</reference>
<reference evidence="10" key="6">
    <citation type="journal article" date="2007" name="Mol. Biosyst.">
        <title>An integrated chemical, mass spectrometric and computational strategy for (quantitative) phosphoproteomics: application to Drosophila melanogaster Kc167 cells.</title>
        <authorList>
            <person name="Bodenmiller B."/>
            <person name="Mueller L.N."/>
            <person name="Pedrioli P.G.A."/>
            <person name="Pflieger D."/>
            <person name="Juenger M.A."/>
            <person name="Eng J.K."/>
            <person name="Aebersold R."/>
            <person name="Tao W.A."/>
        </authorList>
    </citation>
    <scope>PHOSPHORYLATION [LARGE SCALE ANALYSIS] AT SER-501 AND SER-1389</scope>
    <scope>IDENTIFICATION BY MASS SPECTROMETRY</scope>
</reference>
<reference key="7">
    <citation type="journal article" date="2008" name="J. Proteome Res.">
        <title>Phosphoproteome analysis of Drosophila melanogaster embryos.</title>
        <authorList>
            <person name="Zhai B."/>
            <person name="Villen J."/>
            <person name="Beausoleil S.A."/>
            <person name="Mintseris J."/>
            <person name="Gygi S.P."/>
        </authorList>
    </citation>
    <scope>PHOSPHORYLATION [LARGE SCALE ANALYSIS] AT SER-501; SER-1588; SER-2687; THR-2698; SER-2747; SER-2753; SER-3596; SER-3820; SER-3822 AND SER-3825</scope>
    <scope>IDENTIFICATION BY MASS SPECTROMETRY</scope>
    <source>
        <tissue>Embryo</tissue>
    </source>
</reference>
<reference key="8">
    <citation type="journal article" date="2015" name="J. Cell Sci.">
        <title>Binding partners of the kinase domains in Drosophila obscurin and their effect on the structure of the flight muscle.</title>
        <authorList>
            <person name="Katzemich A."/>
            <person name="West R.J."/>
            <person name="Fukuzawa A."/>
            <person name="Sweeney S.T."/>
            <person name="Gautel M."/>
            <person name="Sparrow J."/>
            <person name="Bullard B."/>
        </authorList>
    </citation>
    <scope>FUNCTION</scope>
    <scope>INTERACTION WITH UNC-89</scope>
    <scope>SUBCELLULAR LOCATION</scope>
    <scope>TISSUE SPECIFICITY</scope>
    <scope>DISRUPTION PHENOTYPE</scope>
</reference>
<keyword id="KW-0040">ANK repeat</keyword>
<keyword id="KW-0175">Coiled coil</keyword>
<keyword id="KW-0963">Cytoplasm</keyword>
<keyword id="KW-0217">Developmental protein</keyword>
<keyword id="KW-0597">Phosphoprotein</keyword>
<keyword id="KW-1185">Reference proteome</keyword>
<keyword id="KW-0677">Repeat</keyword>
<keyword id="KW-0694">RNA-binding</keyword>
<comment type="function">
    <text evidence="5 9">Mediator of receptor tyrosine kinase (RTK) signaling, and may act either downstream of MAPK or transduce signaling through a parallel branch of the RTK pathway (PubMed:11782402). Required for the development and organization of indirect flight muscle sarcomeres by regulating the formation of M line and H zone and the correct assembly of thick and thin filaments in the sarcomere (PubMed:26251439).</text>
</comment>
<comment type="subunit">
    <text evidence="9">May interact with Unc-89 (via protein kinase domain 1 or 2).</text>
</comment>
<comment type="interaction">
    <interactant intactId="EBI-89853">
        <id>Q9VCA8</id>
    </interactant>
    <interactant intactId="EBI-114906">
        <id>P14130</id>
        <label>RpS14b</label>
    </interactant>
    <organismsDiffer>false</organismsDiffer>
    <experiments>2</experiments>
</comment>
<comment type="subcellular location">
    <subcellularLocation>
        <location evidence="5">Cytoplasm</location>
    </subcellularLocation>
    <subcellularLocation>
        <location evidence="9">Cytoplasm</location>
        <location evidence="9">Myofibril</location>
        <location evidence="9">Sarcomere</location>
        <location evidence="9">Z line</location>
    </subcellularLocation>
    <subcellularLocation>
        <location evidence="9">Cytoplasm</location>
        <location evidence="9">Myofibril</location>
        <location evidence="9">Sarcomere</location>
        <location evidence="9">M line</location>
    </subcellularLocation>
    <text evidence="9">In indirect flight muscle, more strongly associated with Z lines where it colocalizes with sls isoform A (kettin).</text>
</comment>
<comment type="tissue specificity">
    <text evidence="5 9">Expressed ubiquitously in eye imaginal disk, slightly higher expression is seen in presumptive photoreceptors (PubMed:11782402). Expressed in indirect flight muscle (IFM) (at protein level) (PubMed:26251439).</text>
</comment>
<comment type="disruption phenotype">
    <text evidence="5 9">Flies exhibit compromised photoreceptor differentiation, cell survival and proliferation (PubMed:11782402). RNAi-mediated knockdown in muscles causes severe lethality at the early pupal stage and the few surviving animals cannot fly (PubMed:26251439). Severe defects in the indirect flight muscle structure characterized by narrower myofibrils and abnormal positioning of sarcomere Z line, M line and H line (PubMed:26251439). Although the spacing between Z line and M lines stays regular, M lines are not straight and sarcomere length is shorter. In the more affected myofibrils, the sarcomere structure is lost (PubMed:26251439). Localization of unc-89/obscurin to M lines and localization of kettin (sls isoform A) to Z line is not affected (PubMed:26251439).</text>
</comment>
<comment type="sequence caution" evidence="10">
    <conflict type="erroneous initiation">
        <sequence resource="EMBL-CDS" id="AAL39468"/>
    </conflict>
    <text>Truncated N-terminus.</text>
</comment>
<comment type="sequence caution" evidence="10">
    <conflict type="frameshift">
        <sequence resource="EMBL-CDS" id="AAL39468"/>
    </conflict>
</comment>
<comment type="sequence caution" evidence="10">
    <conflict type="erroneous initiation">
        <sequence resource="EMBL-CDS" id="AAL68383"/>
    </conflict>
</comment>
<comment type="sequence caution" evidence="10">
    <conflict type="erroneous initiation">
        <sequence resource="EMBL-CDS" id="AAM11086"/>
    </conflict>
</comment>
<protein>
    <recommendedName>
        <fullName>Ankyrin repeat and KH domain-containing protein mask</fullName>
    </recommendedName>
    <alternativeName>
        <fullName>Multiple ankyrin repeat single KH domain-containing protein</fullName>
    </alternativeName>
</protein>
<name>ANKHM_DROME</name>
<accession>Q9VCA8</accession>
<accession>Q6NP19</accession>
<accession>Q8SX96</accession>
<accession>Q8T0H2</accession>
<accession>Q8T8Q4</accession>
<accession>Q8WRQ7</accession>